<keyword id="KW-0010">Activator</keyword>
<keyword id="KW-0025">Alternative splicing</keyword>
<keyword id="KW-0963">Cytoplasm</keyword>
<keyword id="KW-0238">DNA-binding</keyword>
<keyword id="KW-0479">Metal-binding</keyword>
<keyword id="KW-0539">Nucleus</keyword>
<keyword id="KW-0597">Phosphoprotein</keyword>
<keyword id="KW-1185">Reference proteome</keyword>
<keyword id="KW-0677">Repeat</keyword>
<keyword id="KW-0804">Transcription</keyword>
<keyword id="KW-0805">Transcription regulation</keyword>
<keyword id="KW-0862">Zinc</keyword>
<keyword id="KW-0863">Zinc-finger</keyword>
<name>AIRE_MOUSE</name>
<feature type="chain" id="PRO_0000064514" description="Autoimmune regulator">
    <location>
        <begin position="1"/>
        <end position="552"/>
    </location>
</feature>
<feature type="domain" description="HSR" evidence="6">
    <location>
        <begin position="1"/>
        <end position="106"/>
    </location>
</feature>
<feature type="domain" description="SAND" evidence="5">
    <location>
        <begin position="182"/>
        <end position="282"/>
    </location>
</feature>
<feature type="zinc finger region" description="PHD-type 1" evidence="4">
    <location>
        <begin position="298"/>
        <end position="345"/>
    </location>
</feature>
<feature type="zinc finger region" description="PHD-type 2" evidence="4">
    <location>
        <begin position="434"/>
        <end position="475"/>
    </location>
</feature>
<feature type="region of interest" description="Disordered" evidence="7">
    <location>
        <begin position="109"/>
        <end position="177"/>
    </location>
</feature>
<feature type="region of interest" description="Disordered" evidence="7">
    <location>
        <begin position="472"/>
        <end position="514"/>
    </location>
</feature>
<feature type="short sequence motif" description="LXXLL motif 1">
    <location>
        <begin position="8"/>
        <end position="12"/>
    </location>
</feature>
<feature type="short sequence motif" description="LXXLL motif 2">
    <location>
        <begin position="64"/>
        <end position="68"/>
    </location>
</feature>
<feature type="short sequence motif" description="Nuclear localization signal" evidence="3">
    <location>
        <begin position="114"/>
        <end position="134"/>
    </location>
</feature>
<feature type="short sequence motif" description="LXXLL motif 3">
    <location>
        <begin position="414"/>
        <end position="418"/>
    </location>
</feature>
<feature type="short sequence motif" description="LXXLL motif 4">
    <location>
        <begin position="520"/>
        <end position="524"/>
    </location>
</feature>
<feature type="compositionally biased region" description="Basic and acidic residues" evidence="7">
    <location>
        <begin position="504"/>
        <end position="514"/>
    </location>
</feature>
<feature type="splice variant" id="VSP_004091" description="In isoform 1c, isoform 1d, isoform 2c, isoform 2d, isoform 3c and isoform 3d." evidence="16">
    <location>
        <begin position="265"/>
        <end position="268"/>
    </location>
</feature>
<feature type="splice variant" id="VSP_004092" description="In isoform 1b, isoform 1d, isoform 2b, isoform 2d, isoform 3b and isoform 3d." evidence="16">
    <location>
        <position position="296"/>
    </location>
</feature>
<feature type="splice variant" id="VSP_004093" description="In isoform 2a, isoform 2b, isoform 2c and isoform 2d." evidence="16">
    <location>
        <begin position="367"/>
        <end position="425"/>
    </location>
</feature>
<feature type="splice variant" id="VSP_004094" description="In isoform 3a, isoform 3b, isoform 3c and isoform 3d." evidence="16">
    <original>ILVGLRSASEKTRGPSRELKASSDAAVTYVNLLAPHPAAPLL</original>
    <variation>DQSPLQILLCRLDSHARHTGRSCTHLWAPSSTWACQGRGRLC</variation>
    <location>
        <begin position="368"/>
        <end position="409"/>
    </location>
</feature>
<feature type="splice variant" id="VSP_004095" description="In isoform 3a, isoform 3b, isoform 3c and isoform 3d." evidence="16">
    <location>
        <begin position="410"/>
        <end position="552"/>
    </location>
</feature>
<feature type="mutagenesis site" description="Abolishes interaction with histone H3." evidence="10">
    <original>D</original>
    <variation>A</variation>
    <location>
        <position position="299"/>
    </location>
</feature>
<feature type="mutagenesis site" description="No effect on interaction with histone H3." evidence="10">
    <original>V</original>
    <variation>M</variation>
    <location>
        <position position="303"/>
    </location>
</feature>
<feature type="mutagenesis site" description="Abolishes interaction with histone H3." evidence="10">
    <original>C</original>
    <variation>W</variation>
    <location>
        <position position="312"/>
    </location>
</feature>
<feature type="mutagenesis site" description="Abolishes interaction with histone H3." evidence="10">
    <original>C</original>
    <variation>Y</variation>
    <location>
        <position position="313"/>
    </location>
</feature>
<feature type="mutagenesis site" description="Reduces interaction with histone H3." evidence="10">
    <original>P</original>
    <variation>L</variation>
    <location>
        <position position="328"/>
    </location>
</feature>
<comment type="function">
    <text evidence="2 11 12 13 14 15 18">Transcription factor playing an essential role to promote self-tolerance in the thymus by regulating the expression of a wide array of self-antigens that have the commonality of being tissue-restricted in their expression pattern in the periphery, called tissue restricted antigens (TRA) (Probable). Binds to G-doublets in an A/T-rich environment; the preferred motif is a tandem repeat of 5'-. ATTGGTTA-3' combined with a 5'-TTATTA-3' box. Binds to nucleosomes (By similarity). Binds to chromatin and interacts selectively with histone H3 that is not methylated at 'Lys-4', not phosphorylated at 'Thr-3' and not methylated at 'Arg-2'. Functions as a sensor of histone H3 modifications that are important for the epigenetic regulation of gene expression. Mainly expressed by medullary thymic epithelial cells (mTECs), induces the expression of thousands of tissue-restricted proteins, which are presented on major histocompatibility complex class I (MHC-I) and MHC-II molecules to developing T-cells percolating through the thymic medulla (By similarity). Also induces self-tolerance through other mechanisms such as the regulation of the mTEC differentiation program (PubMed:19015306). Controls the medullary accumulation of thymic dendritic cells and the development of regulatory T-cell through the regulation of XCL1 expression (PubMed:21300913). Regulates the production of CCR4 and CCR7 ligands in medullary thymic epithelial cells and alters the coordinated maturation and migration of thymocytes (PubMed:19923453). In thimic B-cells, allows the presentation of licensing-dependent endogenous self-anitgen for negative selection (PubMed:26070482). In secondary lymphoid organs, induces functional inactivation of CD4(+) T-cells. Expressed by a distinct bone marrow-derived population, induces self-tolerance through a mechanism that does not require regulatory T-cells and is resitant to innate inflammatory stimuli (PubMed:23993652).</text>
</comment>
<comment type="subunit">
    <text evidence="1">Homodimer and homotetramer. Interacts with CREBBP. Interacts preferentially with histone H3 that is not methylated at 'Lys-4'. Binds with lower affinity to histone H3 that is monomethylated at 'Lys-4'. Trimethylation of histone H3 at 'Lys-4' or phosphorylation at 'Thr-3' abolish the interaction. Binds with lower affinity to histone H3 that is acetylated at 'Lys-4', or that is acetylated at 'Lys-9' or trimethylated at 'Lys-9'. Binds histone H3 that is dimethylated at 'Arg-2' with very low affinity (By similarity).</text>
</comment>
<comment type="interaction">
    <interactant intactId="EBI-80858">
        <id>Q9Z0E3</id>
    </interactant>
    <interactant intactId="EBI-80858">
        <id>Q9Z0E3</id>
        <label>Aire</label>
    </interactant>
    <organismsDiffer>false</organismsDiffer>
    <experiments>4</experiments>
</comment>
<comment type="subcellular location">
    <subcellularLocation>
        <location evidence="5 6 8 11 15">Nucleus</location>
    </subcellularLocation>
    <subcellularLocation>
        <location evidence="8">Cytoplasm</location>
    </subcellularLocation>
    <text evidence="2 11">Predominantly nuclear but also cytoplasmic. Found in nuclear body-like structures (dots) and in a filamentous vimentin-like pattern.</text>
</comment>
<comment type="alternative products">
    <event type="alternative splicing"/>
    <isoform>
        <id>Q9Z0E3-1</id>
        <name>1a</name>
        <sequence type="displayed"/>
    </isoform>
    <isoform>
        <id>Q9Z0E3-2</id>
        <name>1b</name>
        <sequence type="described" ref="VSP_004092"/>
    </isoform>
    <isoform>
        <id>Q9Z0E3-3</id>
        <name>1c</name>
        <sequence type="described" ref="VSP_004091"/>
    </isoform>
    <isoform>
        <id>Q9Z0E3-4</id>
        <name>1d</name>
        <sequence type="described" ref="VSP_004091 VSP_004092"/>
    </isoform>
    <isoform>
        <id>Q9Z0E3-5</id>
        <name>2a</name>
        <sequence type="described" ref="VSP_004093"/>
    </isoform>
    <isoform>
        <id>Q9Z0E3-6</id>
        <name>2b</name>
        <sequence type="described" ref="VSP_004092 VSP_004093"/>
    </isoform>
    <isoform>
        <id>Q9Z0E3-7</id>
        <name>2c</name>
        <sequence type="described" ref="VSP_004091 VSP_004093"/>
    </isoform>
    <isoform>
        <id>Q9Z0E3-8</id>
        <name>2d</name>
        <sequence type="described" ref="VSP_004091 VSP_004092 VSP_004093"/>
    </isoform>
    <isoform>
        <id>Q9Z0E3-9</id>
        <name>3a</name>
        <sequence type="described" ref="VSP_004094 VSP_004095"/>
    </isoform>
    <isoform>
        <id>Q9Z0E3-10</id>
        <name>3b</name>
        <sequence type="described" ref="VSP_004092 VSP_004094 VSP_004095"/>
    </isoform>
    <isoform>
        <id>Q9Z0E3-11</id>
        <name>3c</name>
        <sequence type="described" ref="VSP_004091 VSP_004094 VSP_004095"/>
    </isoform>
    <isoform>
        <id>Q9Z0E3-12</id>
        <name>3d</name>
        <sequence type="described" ref="VSP_004091 VSP_004092 VSP_004094 VSP_004095"/>
    </isoform>
    <text>Additional isoforms seem to exist.</text>
</comment>
<comment type="tissue specificity">
    <text evidence="14 15">Highly expressed in a few cells in the medulla of the thymus (medullary epithelial cells) (at protein level) (PubMed:23993652). Expressed in thymic but no peripheral B-cells (PubMed:26070482). In secondary lymphoid organs, expressed in a discrete population of bone marrow-derived toleregenic antigen presenting cells (APCs) called extrathymic AIRE expressing cells (eTAC)(at protein level) (PubMed:23993652). Detected at very low levels in thymus, lymph node, liver, brain, ovary, lung, testis, kidney, heart, spleen, bone marrow, skeletal muscle and adrenal gland. Isoforms 1a to 1d predominate, isoforms 2a to 2d are intermediate and isoforms 3a to 3d are expressed at extremely low levels.</text>
</comment>
<comment type="developmental stage">
    <text evidence="11">In the thymus, not expressed at 13.5 dpc but present at 16.5 dpc and postnatal day 1.</text>
</comment>
<comment type="domain">
    <text evidence="1">Interacts via the first PHD domain with the N-terminus of histone H3 that is not methylated at 'Lys-4'. Disruption of the first PHD domain has been shown to lead to reduced transcriptional activity and to localization of the protein mainly in the cytoplasm in small granules. While the PHD zinc fingers are necessary for the transactivation capacity of the protein, other regions also modulate this function (By similarity).</text>
</comment>
<comment type="domain">
    <text>The L-X-X-L-L repeats may be implicated in binding to nuclear receptors.</text>
</comment>
<comment type="domain">
    <text evidence="1">The N-terminal HSR domain is required for localization on tubular structures.</text>
</comment>
<comment type="PTM">
    <text evidence="9">Phosphorylated.</text>
</comment>
<comment type="disruption phenotype">
    <text evidence="11 13">Deficient mice show an altered thymic organization with altered morphology and location of mTECs (PubMed:19015306). They exhibit defective accumulation of thymic dendritic cells in the medullary region and generation of naturally ocurring T cells in the thymus (PubMed:21300913).</text>
</comment>
<comment type="miscellaneous">
    <molecule>Isoform 3a</molecule>
    <text evidence="17">Probably inactive.</text>
</comment>
<comment type="miscellaneous">
    <molecule>Isoform 3b</molecule>
    <text evidence="17">Probably inactive.</text>
</comment>
<comment type="miscellaneous">
    <molecule>Isoform 3c</molecule>
    <text evidence="17">Probably inactive.</text>
</comment>
<comment type="miscellaneous">
    <molecule>Isoform 3d</molecule>
    <text evidence="17">Probably inactive.</text>
</comment>
<protein>
    <recommendedName>
        <fullName>Autoimmune regulator</fullName>
    </recommendedName>
    <alternativeName>
        <fullName>Autoimmune polyendocrinopathy candidiasis ectodermal dystrophy protein homolog</fullName>
        <shortName>APECED protein homolog</shortName>
    </alternativeName>
</protein>
<evidence type="ECO:0000250" key="1"/>
<evidence type="ECO:0000250" key="2">
    <source>
        <dbReference type="UniProtKB" id="O43918"/>
    </source>
</evidence>
<evidence type="ECO:0000255" key="3"/>
<evidence type="ECO:0000255" key="4">
    <source>
        <dbReference type="PROSITE-ProRule" id="PRU00146"/>
    </source>
</evidence>
<evidence type="ECO:0000255" key="5">
    <source>
        <dbReference type="PROSITE-ProRule" id="PRU00185"/>
    </source>
</evidence>
<evidence type="ECO:0000255" key="6">
    <source>
        <dbReference type="PROSITE-ProRule" id="PRU00747"/>
    </source>
</evidence>
<evidence type="ECO:0000256" key="7">
    <source>
        <dbReference type="SAM" id="MobiDB-lite"/>
    </source>
</evidence>
<evidence type="ECO:0000269" key="8">
    <source>
    </source>
</evidence>
<evidence type="ECO:0000269" key="9">
    <source>
    </source>
</evidence>
<evidence type="ECO:0000269" key="10">
    <source>
    </source>
</evidence>
<evidence type="ECO:0000269" key="11">
    <source>
    </source>
</evidence>
<evidence type="ECO:0000269" key="12">
    <source>
    </source>
</evidence>
<evidence type="ECO:0000269" key="13">
    <source>
    </source>
</evidence>
<evidence type="ECO:0000269" key="14">
    <source>
    </source>
</evidence>
<evidence type="ECO:0000269" key="15">
    <source>
    </source>
</evidence>
<evidence type="ECO:0000303" key="16">
    <source>
    </source>
</evidence>
<evidence type="ECO:0000305" key="17"/>
<evidence type="ECO:0000305" key="18">
    <source>
    </source>
</evidence>
<reference key="1">
    <citation type="journal article" date="1999" name="Autoimmunity">
        <title>Chromosomal localization and complete genomic sequence of the murine autoimmune regulator gene (Aire).</title>
        <authorList>
            <person name="Shi J.-D."/>
            <person name="Wang C.-Y."/>
            <person name="Marron M.P."/>
            <person name="Ruan Q.-G."/>
            <person name="Huang Y.Q."/>
            <person name="Detter J.C."/>
            <person name="She J.-X."/>
        </authorList>
    </citation>
    <scope>NUCLEOTIDE SEQUENCE [GENOMIC DNA / MRNA] (ISOFORM 1A)</scope>
</reference>
<reference key="2">
    <citation type="journal article" date="1999" name="Biochem. Biophys. Res. Commun.">
        <title>Isolation and characterization of the mouse Aire gene.</title>
        <authorList>
            <person name="Mittaz L."/>
            <person name="Rossier C."/>
            <person name="Heino M."/>
            <person name="Petersen P."/>
            <person name="Krohn K.J.E."/>
            <person name="Gos A."/>
            <person name="Morris M.A."/>
            <person name="Kudoh J."/>
            <person name="Shimizu N."/>
            <person name="Antonarakis S.E."/>
            <person name="Scott H.S."/>
        </authorList>
    </citation>
    <scope>NUCLEOTIDE SEQUENCE [GENOMIC DNA] (ISOFORM 1A)</scope>
    <source>
        <strain>129/Sv</strain>
    </source>
</reference>
<reference key="3">
    <citation type="journal article" date="1999" name="Genomics">
        <title>Cloning of Aire, the mouse homologue of the autoimmune regulator (AIRE) gene responsible for autoimmune polyglandular syndrome type 1 (ASP1).</title>
        <authorList>
            <person name="Wang C.-Y."/>
            <person name="Shi J.-D."/>
            <person name="Davoodi-Semiromi A."/>
            <person name="She J.-X."/>
        </authorList>
    </citation>
    <scope>NUCLEOTIDE SEQUENCE [MRNA] (ISOFORM 1A)</scope>
    <source>
        <strain>C57BL/6J</strain>
        <tissue>Thymus</tissue>
    </source>
</reference>
<reference key="4">
    <citation type="journal article" date="1999" name="Genome Res.">
        <title>The mouse Aire gene: comparative genomic sequencing, gene organization, and expression.</title>
        <authorList>
            <person name="Blechschmidt K."/>
            <person name="Schweiger M."/>
            <person name="Wertz K."/>
            <person name="Poulson R."/>
            <person name="Christensen H.-M."/>
            <person name="Rosenthal A."/>
            <person name="Lehrach H."/>
            <person name="Yaspo M.-L."/>
        </authorList>
    </citation>
    <scope>NUCLEOTIDE SEQUENCE [MRNA]</scope>
    <scope>ALTERNATIVE SPLICING</scope>
    <source>
        <strain>129</strain>
    </source>
</reference>
<reference key="5">
    <citation type="journal article" date="1999" name="J. Autoimmun.">
        <title>Expression and alternative splicing of the mouse autoimmune regulator gene (Aire).</title>
        <authorList>
            <person name="Ruan Q.-G."/>
            <person name="Wang C.-Y."/>
            <person name="Shi J.-D."/>
            <person name="She J.-X."/>
        </authorList>
    </citation>
    <scope>NUCLEOTIDE SEQUENCE [MRNA] (ISOFORMS 1A; 1B; 1C; 1D; 2A; 2B; 2C; 2D; 3A; 3B; 3C AND 3D)</scope>
    <source>
        <strain>C57BL/6J</strain>
        <strain>NOD</strain>
        <strain>SJL/J</strain>
    </source>
</reference>
<reference key="6">
    <citation type="journal article" date="2001" name="J. Histochem. Cytochem.">
        <title>Subcellular location and expression pattern of autoimmune regulator (Aire), the mouse orthologue for human gene defective in autoimmune polyendocrinopathy candidiasis ectodermal dystrophy (APECED).</title>
        <authorList>
            <person name="Halonen M."/>
            <person name="Pelto-Huikko M."/>
            <person name="Eskelin P."/>
            <person name="Peltonen L."/>
            <person name="Ulmanen I."/>
            <person name="Kolmer M."/>
        </authorList>
    </citation>
    <scope>NUCLEOTIDE SEQUENCE [MRNA] (ISOFORM 1A)</scope>
    <scope>SUBCELLULAR LOCATION</scope>
    <source>
        <tissue>Kidney</tissue>
        <tissue>Thymus</tissue>
    </source>
</reference>
<reference key="7">
    <citation type="journal article" date="2001" name="J. Biol. Chem.">
        <title>The autoimmune regulator (AIRE) is a DNA-binding protein.</title>
        <authorList>
            <person name="Kumar P.G."/>
            <person name="Laloraya M."/>
            <person name="Wang C.-Y."/>
            <person name="Ruan Q.-G."/>
            <person name="Davoodi-Semiromi A."/>
            <person name="Kao K.-J."/>
            <person name="She J.-X."/>
        </authorList>
    </citation>
    <scope>SUBUNIT STRUCTURE</scope>
    <scope>PHOSPHORYLATION</scope>
</reference>
<reference key="8">
    <citation type="journal article" date="2008" name="J. Exp. Med.">
        <title>Aire controls the differentiation program of thymic epithelial cells in the medulla for the establishment of self-tolerance.</title>
        <authorList>
            <person name="Yano M."/>
            <person name="Kuroda N."/>
            <person name="Han H."/>
            <person name="Meguro-Horike M."/>
            <person name="Nishikawa Y."/>
            <person name="Kiyonari H."/>
            <person name="Maemura K."/>
            <person name="Yanagawa Y."/>
            <person name="Obata K."/>
            <person name="Takahashi S."/>
            <person name="Ikawa T."/>
            <person name="Satoh R."/>
            <person name="Kawamoto H."/>
            <person name="Mouri Y."/>
            <person name="Matsumoto M."/>
        </authorList>
    </citation>
    <scope>FUNCTION</scope>
    <scope>DISRUPTION PHENOTYPE</scope>
    <scope>SUBCELLULAR LOCATION</scope>
    <scope>DEVELOPMENTAL STAGE</scope>
</reference>
<reference key="9">
    <citation type="journal article" date="2008" name="Proc. Natl. Acad. Sci. U.S.A.">
        <title>Aire employs a histone-binding module to mediate immunological tolerance, linking chromatin regulation with organ-specific autoimmunity.</title>
        <authorList>
            <person name="Koh A.S."/>
            <person name="Kuo A.J."/>
            <person name="Park S.Y."/>
            <person name="Cheung P."/>
            <person name="Abramson J."/>
            <person name="Bua D."/>
            <person name="Carney D."/>
            <person name="Shoelson S.E."/>
            <person name="Gozani O."/>
            <person name="Kingston R.E."/>
            <person name="Benoist C."/>
            <person name="Mathis D."/>
        </authorList>
    </citation>
    <scope>FUNCTION</scope>
    <scope>INTERACTION WITH THE N-TERMINUS OF UNMODIFIED HISTONE H3</scope>
    <scope>INTERACTION WITH NUCLEOSOMES</scope>
    <scope>DNA-BINDING</scope>
    <scope>MUTAGENESIS OF ASP-299; VAL-303; CYS-312; CYS-313 AND PRO-328</scope>
</reference>
<reference key="10">
    <citation type="journal article" date="2009" name="Annu. Rev. Immunol.">
        <title>Aire.</title>
        <authorList>
            <person name="Mathis D."/>
            <person name="Benoist C."/>
        </authorList>
    </citation>
    <scope>REVIEW OF FUNCTION IN SELF-TOLERANCE</scope>
</reference>
<reference key="11">
    <citation type="journal article" date="2009" name="J. Immunol.">
        <title>Autoimmune regulator deficiency results in decreased expression of CCR4 and CCR7 ligands and in delayed migration of CD4+ thymocytes.</title>
        <authorList>
            <person name="Laan M."/>
            <person name="Kisand K."/>
            <person name="Kont V."/>
            <person name="Moell K."/>
            <person name="Tserel L."/>
            <person name="Scott H.S."/>
            <person name="Peterson P."/>
        </authorList>
    </citation>
    <scope>FUNCTION</scope>
</reference>
<reference key="12">
    <citation type="journal article" date="2011" name="J. Exp. Med.">
        <title>Aire-dependent production of XCL1 mediates medullary accumulation of thymic dendritic cells and contributes to regulatory T cell development.</title>
        <authorList>
            <person name="Lei Y."/>
            <person name="Ripen A.M."/>
            <person name="Ishimaru N."/>
            <person name="Ohigashi I."/>
            <person name="Nagasawa T."/>
            <person name="Jeker L.T."/>
            <person name="Boesl M.R."/>
            <person name="Hollaender G.A."/>
            <person name="Hayashi Y."/>
            <person name="Malefyt R.W."/>
            <person name="Nitta T."/>
            <person name="Takahama Y."/>
        </authorList>
    </citation>
    <scope>FUNCTION</scope>
    <scope>TISSUE SPECIFICITY</scope>
</reference>
<reference key="13">
    <citation type="journal article" date="2013" name="Immunity">
        <title>Extrathymic Aire-expressing cells are a distinct bone marrow-derived population that induce functional inactivation of CD4[?] T cells.</title>
        <authorList>
            <person name="Gardner J.M."/>
            <person name="Metzger T.C."/>
            <person name="McMahon E.J."/>
            <person name="Au-Yeung B.B."/>
            <person name="Krawisz A.K."/>
            <person name="Lu W."/>
            <person name="Price J.D."/>
            <person name="Johannes K.P."/>
            <person name="Satpathy A.T."/>
            <person name="Murphy K.M."/>
            <person name="Tarbell K.V."/>
            <person name="Weiss A."/>
            <person name="Anderson M.S."/>
        </authorList>
    </citation>
    <scope>FUNCTION</scope>
    <scope>TISSUE SPECIFICITY</scope>
</reference>
<reference key="14">
    <citation type="journal article" date="2015" name="Immunity">
        <title>Thymic B Cells Are Licensed to Present Self Antigens for Central T Cell Tolerance Induction.</title>
        <authorList>
            <person name="Yamano T."/>
            <person name="Nedjic J."/>
            <person name="Hinterberger M."/>
            <person name="Steinert M."/>
            <person name="Koser S."/>
            <person name="Pinto S."/>
            <person name="Gerdes N."/>
            <person name="Lutgens E."/>
            <person name="Ishimaru N."/>
            <person name="Busslinger M."/>
            <person name="Brors B."/>
            <person name="Kyewski B."/>
            <person name="Klein L."/>
        </authorList>
    </citation>
    <scope>FUNCTION</scope>
    <scope>TISSUE SPECIFICITY</scope>
    <scope>SUBCELLULAR LOCATION</scope>
</reference>
<dbReference type="EMBL" id="AF105002">
    <property type="protein sequence ID" value="AAD46421.1"/>
    <property type="molecule type" value="Genomic_DNA"/>
</dbReference>
<dbReference type="EMBL" id="AF128772">
    <property type="protein sequence ID" value="AAF36481.1"/>
    <property type="molecule type" value="mRNA"/>
</dbReference>
<dbReference type="EMBL" id="AF128773">
    <property type="protein sequence ID" value="AAF36482.1"/>
    <property type="molecule type" value="mRNA"/>
</dbReference>
<dbReference type="EMBL" id="AJ007715">
    <property type="protein sequence ID" value="CAA07620.1"/>
    <property type="molecule type" value="Genomic_DNA"/>
</dbReference>
<dbReference type="EMBL" id="AF079536">
    <property type="protein sequence ID" value="AAD20444.1"/>
    <property type="molecule type" value="mRNA"/>
</dbReference>
<dbReference type="EMBL" id="AJ132243">
    <property type="protein sequence ID" value="CAB36909.1"/>
    <property type="molecule type" value="mRNA"/>
</dbReference>
<dbReference type="EMBL" id="AF128115">
    <property type="protein sequence ID" value="AAF36460.1"/>
    <property type="molecule type" value="mRNA"/>
</dbReference>
<dbReference type="EMBL" id="AF128116">
    <property type="protein sequence ID" value="AAF36461.1"/>
    <property type="molecule type" value="mRNA"/>
</dbReference>
<dbReference type="EMBL" id="AF128117">
    <property type="protein sequence ID" value="AAF36462.1"/>
    <property type="molecule type" value="mRNA"/>
</dbReference>
<dbReference type="EMBL" id="AF128118">
    <property type="protein sequence ID" value="AAF36463.1"/>
    <property type="molecule type" value="mRNA"/>
</dbReference>
<dbReference type="EMBL" id="AF128119">
    <property type="protein sequence ID" value="AAF36464.1"/>
    <property type="molecule type" value="mRNA"/>
</dbReference>
<dbReference type="EMBL" id="AF128120">
    <property type="protein sequence ID" value="AAF36465.1"/>
    <property type="molecule type" value="mRNA"/>
</dbReference>
<dbReference type="EMBL" id="AF128121">
    <property type="protein sequence ID" value="AAF36466.1"/>
    <property type="molecule type" value="mRNA"/>
</dbReference>
<dbReference type="EMBL" id="AF128122">
    <property type="protein sequence ID" value="AAF36467.1"/>
    <property type="molecule type" value="mRNA"/>
</dbReference>
<dbReference type="EMBL" id="AF128123">
    <property type="protein sequence ID" value="AAF36468.1"/>
    <property type="molecule type" value="mRNA"/>
</dbReference>
<dbReference type="EMBL" id="AF128124">
    <property type="protein sequence ID" value="AAF36469.1"/>
    <property type="molecule type" value="mRNA"/>
</dbReference>
<dbReference type="EMBL" id="AF128125">
    <property type="protein sequence ID" value="AAF36470.1"/>
    <property type="molecule type" value="mRNA"/>
</dbReference>
<dbReference type="EMBL" id="AJ243821">
    <property type="protein sequence ID" value="CAB66141.1"/>
    <property type="molecule type" value="mRNA"/>
</dbReference>
<dbReference type="CCDS" id="CCDS23961.1">
    <molecule id="Q9Z0E3-1"/>
</dbReference>
<dbReference type="CCDS" id="CCDS70051.1">
    <molecule id="Q9Z0E3-10"/>
</dbReference>
<dbReference type="CCDS" id="CCDS70052.1">
    <molecule id="Q9Z0E3-6"/>
</dbReference>
<dbReference type="CCDS" id="CCDS70053.1">
    <molecule id="Q9Z0E3-2"/>
</dbReference>
<dbReference type="CCDS" id="CCDS70054.1">
    <molecule id="Q9Z0E3-9"/>
</dbReference>
<dbReference type="CCDS" id="CCDS70055.1">
    <molecule id="Q9Z0E3-5"/>
</dbReference>
<dbReference type="CCDS" id="CCDS70056.1">
    <molecule id="Q9Z0E3-12"/>
</dbReference>
<dbReference type="CCDS" id="CCDS70057.1">
    <molecule id="Q9Z0E3-8"/>
</dbReference>
<dbReference type="CCDS" id="CCDS70058.1">
    <molecule id="Q9Z0E3-4"/>
</dbReference>
<dbReference type="CCDS" id="CCDS70059.1">
    <molecule id="Q9Z0E3-11"/>
</dbReference>
<dbReference type="CCDS" id="CCDS70060.1">
    <molecule id="Q9Z0E3-3"/>
</dbReference>
<dbReference type="RefSeq" id="NP_001258478.1">
    <molecule id="Q9Z0E3-2"/>
    <property type="nucleotide sequence ID" value="NM_001271549.1"/>
</dbReference>
<dbReference type="RefSeq" id="NP_001258479.1">
    <molecule id="Q9Z0E3-3"/>
    <property type="nucleotide sequence ID" value="NM_001271550.1"/>
</dbReference>
<dbReference type="RefSeq" id="NP_001258480.1">
    <molecule id="Q9Z0E3-4"/>
    <property type="nucleotide sequence ID" value="NM_001271551.1"/>
</dbReference>
<dbReference type="RefSeq" id="NP_001258481.1">
    <molecule id="Q9Z0E3-5"/>
    <property type="nucleotide sequence ID" value="NM_001271552.1"/>
</dbReference>
<dbReference type="RefSeq" id="NP_001258482.1">
    <molecule id="Q9Z0E3-6"/>
    <property type="nucleotide sequence ID" value="NM_001271553.1"/>
</dbReference>
<dbReference type="RefSeq" id="NP_001258483.1">
    <molecule id="Q9Z0E3-7"/>
    <property type="nucleotide sequence ID" value="NM_001271554.1"/>
</dbReference>
<dbReference type="RefSeq" id="NP_001258484.1">
    <molecule id="Q9Z0E3-8"/>
    <property type="nucleotide sequence ID" value="NM_001271555.1"/>
</dbReference>
<dbReference type="RefSeq" id="NP_001258485.1">
    <molecule id="Q9Z0E3-9"/>
    <property type="nucleotide sequence ID" value="NM_001271556.1"/>
</dbReference>
<dbReference type="RefSeq" id="NP_001258486.1">
    <molecule id="Q9Z0E3-10"/>
    <property type="nucleotide sequence ID" value="NM_001271557.1"/>
</dbReference>
<dbReference type="RefSeq" id="NP_001258487.1">
    <molecule id="Q9Z0E3-11"/>
    <property type="nucleotide sequence ID" value="NM_001271558.1"/>
</dbReference>
<dbReference type="RefSeq" id="NP_001258488.1">
    <molecule id="Q9Z0E3-12"/>
    <property type="nucleotide sequence ID" value="NM_001271559.1"/>
</dbReference>
<dbReference type="RefSeq" id="NP_033776.1">
    <molecule id="Q9Z0E3-1"/>
    <property type="nucleotide sequence ID" value="NM_009646.2"/>
</dbReference>
<dbReference type="SMR" id="Q9Z0E3"/>
<dbReference type="BioGRID" id="198044">
    <property type="interactions" value="3"/>
</dbReference>
<dbReference type="DIP" id="DIP-31030N"/>
<dbReference type="FunCoup" id="Q9Z0E3">
    <property type="interactions" value="1318"/>
</dbReference>
<dbReference type="IntAct" id="Q9Z0E3">
    <property type="interactions" value="90"/>
</dbReference>
<dbReference type="STRING" id="10090.ENSMUSP00000114904"/>
<dbReference type="MoonProt" id="Q9Z0E3"/>
<dbReference type="GlyGen" id="Q9Z0E3">
    <property type="glycosylation" value="3 sites"/>
</dbReference>
<dbReference type="iPTMnet" id="Q9Z0E3"/>
<dbReference type="PhosphoSitePlus" id="Q9Z0E3"/>
<dbReference type="jPOST" id="Q9Z0E3"/>
<dbReference type="PaxDb" id="10090-ENSMUSP00000114904"/>
<dbReference type="ProteomicsDB" id="282046">
    <molecule id="Q9Z0E3-1"/>
</dbReference>
<dbReference type="ProteomicsDB" id="282047">
    <molecule id="Q9Z0E3-2"/>
</dbReference>
<dbReference type="ProteomicsDB" id="282048">
    <molecule id="Q9Z0E3-3"/>
</dbReference>
<dbReference type="ProteomicsDB" id="282049">
    <molecule id="Q9Z0E3-4"/>
</dbReference>
<dbReference type="ProteomicsDB" id="282050">
    <molecule id="Q9Z0E3-5"/>
</dbReference>
<dbReference type="ProteomicsDB" id="282051">
    <molecule id="Q9Z0E3-6"/>
</dbReference>
<dbReference type="ProteomicsDB" id="282052">
    <molecule id="Q9Z0E3-7"/>
</dbReference>
<dbReference type="ProteomicsDB" id="282053">
    <molecule id="Q9Z0E3-8"/>
</dbReference>
<dbReference type="ProteomicsDB" id="282054">
    <molecule id="Q9Z0E3-9"/>
</dbReference>
<dbReference type="ProteomicsDB" id="282055">
    <molecule id="Q9Z0E3-10"/>
</dbReference>
<dbReference type="ProteomicsDB" id="282056">
    <molecule id="Q9Z0E3-11"/>
</dbReference>
<dbReference type="ProteomicsDB" id="282057">
    <molecule id="Q9Z0E3-12"/>
</dbReference>
<dbReference type="Antibodypedia" id="10157">
    <property type="antibodies" value="632 antibodies from 42 providers"/>
</dbReference>
<dbReference type="DNASU" id="11634"/>
<dbReference type="Ensembl" id="ENSMUST00000019257.15">
    <molecule id="Q9Z0E3-2"/>
    <property type="protein sequence ID" value="ENSMUSP00000019257.9"/>
    <property type="gene ID" value="ENSMUSG00000000731.16"/>
</dbReference>
<dbReference type="Ensembl" id="ENSMUST00000105395.9">
    <molecule id="Q9Z0E3-9"/>
    <property type="protein sequence ID" value="ENSMUSP00000101034.3"/>
    <property type="gene ID" value="ENSMUSG00000000731.16"/>
</dbReference>
<dbReference type="Ensembl" id="ENSMUST00000105396.9">
    <molecule id="Q9Z0E3-6"/>
    <property type="protein sequence ID" value="ENSMUSP00000101035.3"/>
    <property type="gene ID" value="ENSMUSG00000000731.16"/>
</dbReference>
<dbReference type="Ensembl" id="ENSMUST00000128241.8">
    <molecule id="Q9Z0E3-1"/>
    <property type="protein sequence ID" value="ENSMUSP00000114904.2"/>
    <property type="gene ID" value="ENSMUSG00000000731.16"/>
</dbReference>
<dbReference type="Ensembl" id="ENSMUST00000130972.8">
    <molecule id="Q9Z0E3-4"/>
    <property type="protein sequence ID" value="ENSMUSP00000122659.2"/>
    <property type="gene ID" value="ENSMUSG00000000731.16"/>
</dbReference>
<dbReference type="Ensembl" id="ENSMUST00000140636.8">
    <molecule id="Q9Z0E3-12"/>
    <property type="protein sequence ID" value="ENSMUSP00000121477.2"/>
    <property type="gene ID" value="ENSMUSG00000000731.16"/>
</dbReference>
<dbReference type="Ensembl" id="ENSMUST00000145975.8">
    <molecule id="Q9Z0E3-3"/>
    <property type="protein sequence ID" value="ENSMUSP00000120150.2"/>
    <property type="gene ID" value="ENSMUSG00000000731.16"/>
</dbReference>
<dbReference type="Ensembl" id="ENSMUST00000148469.8">
    <molecule id="Q9Z0E3-11"/>
    <property type="protein sequence ID" value="ENSMUSP00000118317.2"/>
    <property type="gene ID" value="ENSMUSG00000000731.16"/>
</dbReference>
<dbReference type="Ensembl" id="ENSMUST00000154374.2">
    <molecule id="Q9Z0E3-5"/>
    <property type="protein sequence ID" value="ENSMUSP00000117094.2"/>
    <property type="gene ID" value="ENSMUSG00000000731.16"/>
</dbReference>
<dbReference type="Ensembl" id="ENSMUST00000155021.8">
    <molecule id="Q9Z0E3-8"/>
    <property type="protein sequence ID" value="ENSMUSP00000122190.2"/>
    <property type="gene ID" value="ENSMUSG00000000731.16"/>
</dbReference>
<dbReference type="Ensembl" id="ENSMUST00000156417.8">
    <molecule id="Q9Z0E3-10"/>
    <property type="protein sequence ID" value="ENSMUSP00000115162.2"/>
    <property type="gene ID" value="ENSMUSG00000000731.16"/>
</dbReference>
<dbReference type="GeneID" id="11634"/>
<dbReference type="KEGG" id="mmu:11634"/>
<dbReference type="UCSC" id="uc007fwr.2">
    <molecule id="Q9Z0E3-1"/>
    <property type="organism name" value="mouse"/>
</dbReference>
<dbReference type="UCSC" id="uc007fws.2">
    <molecule id="Q9Z0E3-4"/>
    <property type="organism name" value="mouse"/>
</dbReference>
<dbReference type="UCSC" id="uc007fwt.2">
    <molecule id="Q9Z0E3-10"/>
    <property type="organism name" value="mouse"/>
</dbReference>
<dbReference type="UCSC" id="uc007fwu.2">
    <molecule id="Q9Z0E3-6"/>
    <property type="organism name" value="mouse"/>
</dbReference>
<dbReference type="UCSC" id="uc007fwv.2">
    <molecule id="Q9Z0E3-12"/>
    <property type="organism name" value="mouse"/>
</dbReference>
<dbReference type="UCSC" id="uc007fww.2">
    <molecule id="Q9Z0E3-8"/>
    <property type="organism name" value="mouse"/>
</dbReference>
<dbReference type="UCSC" id="uc007fwx.2">
    <molecule id="Q9Z0E3-3"/>
    <property type="organism name" value="mouse"/>
</dbReference>
<dbReference type="UCSC" id="uc007fwz.2">
    <molecule id="Q9Z0E3-9"/>
    <property type="organism name" value="mouse"/>
</dbReference>
<dbReference type="UCSC" id="uc007fxa.2">
    <molecule id="Q9Z0E3-11"/>
    <property type="organism name" value="mouse"/>
</dbReference>
<dbReference type="UCSC" id="uc007fxb.2">
    <molecule id="Q9Z0E3-7"/>
    <property type="organism name" value="mouse"/>
</dbReference>
<dbReference type="AGR" id="MGI:1338803"/>
<dbReference type="CTD" id="326"/>
<dbReference type="MGI" id="MGI:1338803">
    <property type="gene designation" value="Aire"/>
</dbReference>
<dbReference type="VEuPathDB" id="HostDB:ENSMUSG00000000731"/>
<dbReference type="eggNOG" id="KOG0383">
    <property type="taxonomic scope" value="Eukaryota"/>
</dbReference>
<dbReference type="GeneTree" id="ENSGT00940000161104"/>
<dbReference type="HOGENOM" id="CLU_042233_1_0_1"/>
<dbReference type="InParanoid" id="Q9Z0E3"/>
<dbReference type="OMA" id="DVLRCTH"/>
<dbReference type="OrthoDB" id="787137at2759"/>
<dbReference type="PhylomeDB" id="Q9Z0E3"/>
<dbReference type="TreeFam" id="TF336193"/>
<dbReference type="BioGRID-ORCS" id="11634">
    <property type="hits" value="3 hits in 82 CRISPR screens"/>
</dbReference>
<dbReference type="ChiTaRS" id="Aire">
    <property type="organism name" value="mouse"/>
</dbReference>
<dbReference type="PRO" id="PR:Q9Z0E3"/>
<dbReference type="Proteomes" id="UP000000589">
    <property type="component" value="Chromosome 10"/>
</dbReference>
<dbReference type="RNAct" id="Q9Z0E3">
    <property type="molecule type" value="protein"/>
</dbReference>
<dbReference type="Bgee" id="ENSMUSG00000000731">
    <property type="expression patterns" value="Expressed in primary oocyte and 71 other cell types or tissues"/>
</dbReference>
<dbReference type="ExpressionAtlas" id="Q9Z0E3">
    <property type="expression patterns" value="baseline and differential"/>
</dbReference>
<dbReference type="GO" id="GO:0005737">
    <property type="term" value="C:cytoplasm"/>
    <property type="evidence" value="ECO:0000314"/>
    <property type="project" value="MGI"/>
</dbReference>
<dbReference type="GO" id="GO:0001674">
    <property type="term" value="C:female germ cell nucleus"/>
    <property type="evidence" value="ECO:0000314"/>
    <property type="project" value="MGI"/>
</dbReference>
<dbReference type="GO" id="GO:0001673">
    <property type="term" value="C:male germ cell nucleus"/>
    <property type="evidence" value="ECO:0000314"/>
    <property type="project" value="MGI"/>
</dbReference>
<dbReference type="GO" id="GO:0016604">
    <property type="term" value="C:nuclear body"/>
    <property type="evidence" value="ECO:0000314"/>
    <property type="project" value="UniProtKB"/>
</dbReference>
<dbReference type="GO" id="GO:0005634">
    <property type="term" value="C:nucleus"/>
    <property type="evidence" value="ECO:0000314"/>
    <property type="project" value="MGI"/>
</dbReference>
<dbReference type="GO" id="GO:0003682">
    <property type="term" value="F:chromatin binding"/>
    <property type="evidence" value="ECO:0000250"/>
    <property type="project" value="UniProtKB"/>
</dbReference>
<dbReference type="GO" id="GO:0042393">
    <property type="term" value="F:histone binding"/>
    <property type="evidence" value="ECO:0000250"/>
    <property type="project" value="UniProtKB"/>
</dbReference>
<dbReference type="GO" id="GO:0042802">
    <property type="term" value="F:identical protein binding"/>
    <property type="evidence" value="ECO:0000353"/>
    <property type="project" value="IntAct"/>
</dbReference>
<dbReference type="GO" id="GO:0000977">
    <property type="term" value="F:RNA polymerase II transcription regulatory region sequence-specific DNA binding"/>
    <property type="evidence" value="ECO:0007669"/>
    <property type="project" value="Ensembl"/>
</dbReference>
<dbReference type="GO" id="GO:0045182">
    <property type="term" value="F:translation regulator activity"/>
    <property type="evidence" value="ECO:0007669"/>
    <property type="project" value="InterPro"/>
</dbReference>
<dbReference type="GO" id="GO:0008270">
    <property type="term" value="F:zinc ion binding"/>
    <property type="evidence" value="ECO:0000250"/>
    <property type="project" value="UniProtKB"/>
</dbReference>
<dbReference type="GO" id="GO:0002509">
    <property type="term" value="P:central tolerance induction to self antigen"/>
    <property type="evidence" value="ECO:0000250"/>
    <property type="project" value="UniProtKB"/>
</dbReference>
<dbReference type="GO" id="GO:0006959">
    <property type="term" value="P:humoral immune response"/>
    <property type="evidence" value="ECO:0000315"/>
    <property type="project" value="MGI"/>
</dbReference>
<dbReference type="GO" id="GO:0045060">
    <property type="term" value="P:negative thymic T cell selection"/>
    <property type="evidence" value="ECO:0000316"/>
    <property type="project" value="MGI"/>
</dbReference>
<dbReference type="GO" id="GO:0002458">
    <property type="term" value="P:peripheral T cell tolerance induction"/>
    <property type="evidence" value="ECO:0000314"/>
    <property type="project" value="UniProtKB"/>
</dbReference>
<dbReference type="GO" id="GO:0032722">
    <property type="term" value="P:positive regulation of chemokine production"/>
    <property type="evidence" value="ECO:0000315"/>
    <property type="project" value="UniProtKB"/>
</dbReference>
<dbReference type="GO" id="GO:0045893">
    <property type="term" value="P:positive regulation of DNA-templated transcription"/>
    <property type="evidence" value="ECO:0000250"/>
    <property type="project" value="UniProtKB"/>
</dbReference>
<dbReference type="GO" id="GO:0045944">
    <property type="term" value="P:positive regulation of transcription by RNA polymerase II"/>
    <property type="evidence" value="ECO:0000314"/>
    <property type="project" value="MGI"/>
</dbReference>
<dbReference type="GO" id="GO:2000410">
    <property type="term" value="P:regulation of thymocyte migration"/>
    <property type="evidence" value="ECO:0000315"/>
    <property type="project" value="UniProtKB"/>
</dbReference>
<dbReference type="GO" id="GO:0097536">
    <property type="term" value="P:thymus epithelium morphogenesis"/>
    <property type="evidence" value="ECO:0000315"/>
    <property type="project" value="UniProtKB"/>
</dbReference>
<dbReference type="GO" id="GO:0006366">
    <property type="term" value="P:transcription by RNA polymerase II"/>
    <property type="evidence" value="ECO:0000315"/>
    <property type="project" value="MGI"/>
</dbReference>
<dbReference type="CDD" id="cd15539">
    <property type="entry name" value="PHD1_AIRE"/>
    <property type="match status" value="1"/>
</dbReference>
<dbReference type="CDD" id="cd15540">
    <property type="entry name" value="PHD2_AIRE"/>
    <property type="match status" value="1"/>
</dbReference>
<dbReference type="FunFam" id="3.10.390.10:FF:000006">
    <property type="entry name" value="Autoimmune regulator"/>
    <property type="match status" value="1"/>
</dbReference>
<dbReference type="FunFam" id="3.30.40.10:FF:000374">
    <property type="entry name" value="Autoimmune regulator"/>
    <property type="match status" value="1"/>
</dbReference>
<dbReference type="FunFam" id="3.30.40.10:FF:000446">
    <property type="entry name" value="Autoimmune regulator"/>
    <property type="match status" value="1"/>
</dbReference>
<dbReference type="Gene3D" id="3.10.390.10">
    <property type="entry name" value="SAND domain-like"/>
    <property type="match status" value="1"/>
</dbReference>
<dbReference type="Gene3D" id="3.30.40.10">
    <property type="entry name" value="Zinc/RING finger domain, C3HC4 (zinc finger)"/>
    <property type="match status" value="2"/>
</dbReference>
<dbReference type="InterPro" id="IPR008087">
    <property type="entry name" value="AIRE"/>
</dbReference>
<dbReference type="InterPro" id="IPR042580">
    <property type="entry name" value="AIRE_PHD2"/>
</dbReference>
<dbReference type="InterPro" id="IPR004865">
    <property type="entry name" value="HSR_dom"/>
</dbReference>
<dbReference type="InterPro" id="IPR010919">
    <property type="entry name" value="SAND-like_dom_sf"/>
</dbReference>
<dbReference type="InterPro" id="IPR000770">
    <property type="entry name" value="SAND_dom"/>
</dbReference>
<dbReference type="InterPro" id="IPR043563">
    <property type="entry name" value="Sp110/Sp140/Sp140L-like"/>
</dbReference>
<dbReference type="InterPro" id="IPR019786">
    <property type="entry name" value="Zinc_finger_PHD-type_CS"/>
</dbReference>
<dbReference type="InterPro" id="IPR011011">
    <property type="entry name" value="Znf_FYVE_PHD"/>
</dbReference>
<dbReference type="InterPro" id="IPR001965">
    <property type="entry name" value="Znf_PHD"/>
</dbReference>
<dbReference type="InterPro" id="IPR019787">
    <property type="entry name" value="Znf_PHD-finger"/>
</dbReference>
<dbReference type="InterPro" id="IPR013083">
    <property type="entry name" value="Znf_RING/FYVE/PHD"/>
</dbReference>
<dbReference type="PANTHER" id="PTHR46386">
    <property type="entry name" value="NUCLEAR BODY PROTEIN SP140"/>
    <property type="match status" value="1"/>
</dbReference>
<dbReference type="PANTHER" id="PTHR46386:SF1">
    <property type="entry name" value="NUCLEAR BODY PROTEIN SP140-LIKE PROTEIN"/>
    <property type="match status" value="1"/>
</dbReference>
<dbReference type="Pfam" id="PF03172">
    <property type="entry name" value="HSR"/>
    <property type="match status" value="1"/>
</dbReference>
<dbReference type="Pfam" id="PF00628">
    <property type="entry name" value="PHD"/>
    <property type="match status" value="1"/>
</dbReference>
<dbReference type="Pfam" id="PF01342">
    <property type="entry name" value="SAND"/>
    <property type="match status" value="1"/>
</dbReference>
<dbReference type="PRINTS" id="PR01711">
    <property type="entry name" value="AIREGULATOR"/>
</dbReference>
<dbReference type="SMART" id="SM00249">
    <property type="entry name" value="PHD"/>
    <property type="match status" value="2"/>
</dbReference>
<dbReference type="SMART" id="SM00258">
    <property type="entry name" value="SAND"/>
    <property type="match status" value="1"/>
</dbReference>
<dbReference type="SUPFAM" id="SSF57903">
    <property type="entry name" value="FYVE/PHD zinc finger"/>
    <property type="match status" value="2"/>
</dbReference>
<dbReference type="SUPFAM" id="SSF63763">
    <property type="entry name" value="SAND domain-like"/>
    <property type="match status" value="1"/>
</dbReference>
<dbReference type="PROSITE" id="PS51414">
    <property type="entry name" value="HSR"/>
    <property type="match status" value="1"/>
</dbReference>
<dbReference type="PROSITE" id="PS50864">
    <property type="entry name" value="SAND"/>
    <property type="match status" value="1"/>
</dbReference>
<dbReference type="PROSITE" id="PS01359">
    <property type="entry name" value="ZF_PHD_1"/>
    <property type="match status" value="2"/>
</dbReference>
<dbReference type="PROSITE" id="PS50016">
    <property type="entry name" value="ZF_PHD_2"/>
    <property type="match status" value="1"/>
</dbReference>
<organism>
    <name type="scientific">Mus musculus</name>
    <name type="common">Mouse</name>
    <dbReference type="NCBI Taxonomy" id="10090"/>
    <lineage>
        <taxon>Eukaryota</taxon>
        <taxon>Metazoa</taxon>
        <taxon>Chordata</taxon>
        <taxon>Craniata</taxon>
        <taxon>Vertebrata</taxon>
        <taxon>Euteleostomi</taxon>
        <taxon>Mammalia</taxon>
        <taxon>Eutheria</taxon>
        <taxon>Euarchontoglires</taxon>
        <taxon>Glires</taxon>
        <taxon>Rodentia</taxon>
        <taxon>Myomorpha</taxon>
        <taxon>Muroidea</taxon>
        <taxon>Muridae</taxon>
        <taxon>Murinae</taxon>
        <taxon>Mus</taxon>
        <taxon>Mus</taxon>
    </lineage>
</organism>
<gene>
    <name type="primary">Aire</name>
</gene>
<accession>Q9Z0E3</accession>
<accession>Q9JLW0</accession>
<accession>Q9JLW1</accession>
<accession>Q9JLW2</accession>
<accession>Q9JLW3</accession>
<accession>Q9JLW4</accession>
<accession>Q9JLW5</accession>
<accession>Q9JLW6</accession>
<accession>Q9JLW7</accession>
<accession>Q9JLW8</accession>
<accession>Q9JLW9</accession>
<accession>Q9JLX0</accession>
<proteinExistence type="evidence at protein level"/>
<sequence length="552" mass="59042">MAGGDGMLRRLLRLHRTEIAVAIDSAFPLLHALADHDVVPEDKFQETLRLKEKEGCPQAFHALLSWLLTRDSGAILDFWRILFKDYNLERYSRLHSILDGFPKDVDLNQSRKGRKPLAGPKAAVLPPRPPTKRKALEEPRATPPATLASKSVSSPGSHLKTKPPKKPDGNLESQHLPLGNGIQTMAASVQRAVTVASGDVPGTRGAVEGILIQQVFESGRSKKCIQVGGEFYTPNKFEDPSGNLKNKARSGSSLKPVVRAKGAQVTIPGRDEQKVGQQCGVPPLPSLPSEPQVNQKNEDECAVCHDGGELICCDGCPRAFHLACLSPPLQEIPSGLWRCSCCLQGRVQQNLSQPEVSRPPELPAETPILVGLRSASEKTRGPSRELKASSDAAVTYVNLLAPHPAAPLLEPSALCPLLSAGNEGRPGPAPSARCSVCGDGTEVLRCAHCAAAFHWRCHFPTAAARPGTNLRCKSCSADSTPTPGTPGEAVPTSGPRPAPGLAKVGDDSASHDPVLHRDDLESLLNEHSFDGILQWAIQSMSRPLAETPPFSS</sequence>